<comment type="function">
    <text evidence="5">Probable component of a transcriptional corepressor complex that acts specifically in the karrikin pathway (PubMed:26754282). Controls seedling growth redundantly with SMAX1, but is not involved in leaf morphology, shoot branching or germination control (PubMed:26754282).</text>
</comment>
<comment type="subunit">
    <text evidence="1">Interacts probably with TPL/TPR in an EAR-motif dependent manner.</text>
</comment>
<comment type="tissue specificity">
    <text evidence="4">Expressed in seedlings and leaves. Detected in roots and axillary branches.</text>
</comment>
<comment type="induction">
    <text evidence="4">Up-regulated by karrikins and strigolactone treatments.</text>
</comment>
<comment type="disruption phenotype">
    <text evidence="5">No visible phenotype under continuous red light (PubMed:26754282). Smax1 and smxl2 double mutants have substantial reduction in hypocotyl elongation (PubMed:26754282).</text>
</comment>
<comment type="similarity">
    <text evidence="7">Belongs to the ClpA/ClpB family.</text>
</comment>
<proteinExistence type="evidence at transcript level"/>
<dbReference type="EMBL" id="AL161576">
    <property type="protein sequence ID" value="CAB81028.1"/>
    <property type="molecule type" value="Genomic_DNA"/>
</dbReference>
<dbReference type="EMBL" id="CP002687">
    <property type="protein sequence ID" value="AEE85755.1"/>
    <property type="molecule type" value="Genomic_DNA"/>
</dbReference>
<dbReference type="PIR" id="H85354">
    <property type="entry name" value="H85354"/>
</dbReference>
<dbReference type="RefSeq" id="NP_194764.1">
    <property type="nucleotide sequence ID" value="NM_119181.3"/>
</dbReference>
<dbReference type="FunCoup" id="Q9M0C5">
    <property type="interactions" value="1"/>
</dbReference>
<dbReference type="STRING" id="3702.Q9M0C5"/>
<dbReference type="PaxDb" id="3702-AT4G30350.1"/>
<dbReference type="ProteomicsDB" id="234474"/>
<dbReference type="EnsemblPlants" id="AT4G30350.1">
    <property type="protein sequence ID" value="AT4G30350.1"/>
    <property type="gene ID" value="AT4G30350"/>
</dbReference>
<dbReference type="GeneID" id="829158"/>
<dbReference type="Gramene" id="AT4G30350.1">
    <property type="protein sequence ID" value="AT4G30350.1"/>
    <property type="gene ID" value="AT4G30350"/>
</dbReference>
<dbReference type="KEGG" id="ath:AT4G30350"/>
<dbReference type="Araport" id="AT4G30350"/>
<dbReference type="TAIR" id="AT4G30350">
    <property type="gene designation" value="SMXL2"/>
</dbReference>
<dbReference type="eggNOG" id="KOG1051">
    <property type="taxonomic scope" value="Eukaryota"/>
</dbReference>
<dbReference type="HOGENOM" id="CLU_006575_0_2_1"/>
<dbReference type="InParanoid" id="Q9M0C5"/>
<dbReference type="OMA" id="QPMISEI"/>
<dbReference type="OrthoDB" id="1929681at2759"/>
<dbReference type="PhylomeDB" id="Q9M0C5"/>
<dbReference type="PRO" id="PR:Q9M0C5"/>
<dbReference type="Proteomes" id="UP000006548">
    <property type="component" value="Chromosome 4"/>
</dbReference>
<dbReference type="ExpressionAtlas" id="Q9M0C5">
    <property type="expression patterns" value="baseline and differential"/>
</dbReference>
<dbReference type="GO" id="GO:0005524">
    <property type="term" value="F:ATP binding"/>
    <property type="evidence" value="ECO:0007669"/>
    <property type="project" value="InterPro"/>
</dbReference>
<dbReference type="GO" id="GO:0016887">
    <property type="term" value="F:ATP hydrolysis activity"/>
    <property type="evidence" value="ECO:0007669"/>
    <property type="project" value="InterPro"/>
</dbReference>
<dbReference type="GO" id="GO:0007623">
    <property type="term" value="P:circadian rhythm"/>
    <property type="evidence" value="ECO:0000270"/>
    <property type="project" value="TAIR"/>
</dbReference>
<dbReference type="GO" id="GO:1902347">
    <property type="term" value="P:response to strigolactone"/>
    <property type="evidence" value="ECO:0000315"/>
    <property type="project" value="TAIR"/>
</dbReference>
<dbReference type="CDD" id="cd19499">
    <property type="entry name" value="RecA-like_ClpB_Hsp104-like"/>
    <property type="match status" value="1"/>
</dbReference>
<dbReference type="FunFam" id="1.10.1780.10:FF:000016">
    <property type="entry name" value="Protein SMAX1-LIKE 2"/>
    <property type="match status" value="1"/>
</dbReference>
<dbReference type="FunFam" id="3.40.50.300:FF:003505">
    <property type="entry name" value="Protein SUPPRESSOR OF MAX2 1"/>
    <property type="match status" value="1"/>
</dbReference>
<dbReference type="Gene3D" id="1.10.1780.10">
    <property type="entry name" value="Clp, N-terminal domain"/>
    <property type="match status" value="1"/>
</dbReference>
<dbReference type="Gene3D" id="3.40.50.300">
    <property type="entry name" value="P-loop containing nucleotide triphosphate hydrolases"/>
    <property type="match status" value="2"/>
</dbReference>
<dbReference type="InterPro" id="IPR003959">
    <property type="entry name" value="ATPase_AAA_core"/>
</dbReference>
<dbReference type="InterPro" id="IPR036628">
    <property type="entry name" value="Clp_N_dom_sf"/>
</dbReference>
<dbReference type="InterPro" id="IPR004176">
    <property type="entry name" value="Clp_R_dom"/>
</dbReference>
<dbReference type="InterPro" id="IPR027417">
    <property type="entry name" value="P-loop_NTPase"/>
</dbReference>
<dbReference type="InterPro" id="IPR051650">
    <property type="entry name" value="SL_signaling_regulator"/>
</dbReference>
<dbReference type="PANTHER" id="PTHR43572">
    <property type="entry name" value="CHAPERONE PROTEIN CLPD, CHLOROPLASTIC"/>
    <property type="match status" value="1"/>
</dbReference>
<dbReference type="PANTHER" id="PTHR43572:SF27">
    <property type="entry name" value="PROTEIN SMAX1-LIKE 2"/>
    <property type="match status" value="1"/>
</dbReference>
<dbReference type="Pfam" id="PF07724">
    <property type="entry name" value="AAA_2"/>
    <property type="match status" value="1"/>
</dbReference>
<dbReference type="Pfam" id="PF23569">
    <property type="entry name" value="NBD_SMAX1"/>
    <property type="match status" value="1"/>
</dbReference>
<dbReference type="SUPFAM" id="SSF81923">
    <property type="entry name" value="Double Clp-N motif"/>
    <property type="match status" value="1"/>
</dbReference>
<dbReference type="SUPFAM" id="SSF52540">
    <property type="entry name" value="P-loop containing nucleoside triphosphate hydrolases"/>
    <property type="match status" value="1"/>
</dbReference>
<dbReference type="PROSITE" id="PS51903">
    <property type="entry name" value="CLP_R"/>
    <property type="match status" value="1"/>
</dbReference>
<organism>
    <name type="scientific">Arabidopsis thaliana</name>
    <name type="common">Mouse-ear cress</name>
    <dbReference type="NCBI Taxonomy" id="3702"/>
    <lineage>
        <taxon>Eukaryota</taxon>
        <taxon>Viridiplantae</taxon>
        <taxon>Streptophyta</taxon>
        <taxon>Embryophyta</taxon>
        <taxon>Tracheophyta</taxon>
        <taxon>Spermatophyta</taxon>
        <taxon>Magnoliopsida</taxon>
        <taxon>eudicotyledons</taxon>
        <taxon>Gunneridae</taxon>
        <taxon>Pentapetalae</taxon>
        <taxon>rosids</taxon>
        <taxon>malvids</taxon>
        <taxon>Brassicales</taxon>
        <taxon>Brassicaceae</taxon>
        <taxon>Camelineae</taxon>
        <taxon>Arabidopsis</taxon>
    </lineage>
</organism>
<gene>
    <name evidence="6" type="primary">SMXL2</name>
    <name evidence="8" type="ordered locus">At4g30350</name>
    <name evidence="9" type="ORF">F17I23.310</name>
</gene>
<feature type="chain" id="PRO_0000435711" description="Protein SMAX1-LIKE 2">
    <location>
        <begin position="1"/>
        <end position="924"/>
    </location>
</feature>
<feature type="domain" description="Clp R" evidence="2">
    <location>
        <begin position="8"/>
        <end position="181"/>
    </location>
</feature>
<feature type="region of interest" description="Repeat 1" evidence="2">
    <location>
        <begin position="12"/>
        <end position="83"/>
    </location>
</feature>
<feature type="region of interest" description="Disordered" evidence="3">
    <location>
        <begin position="86"/>
        <end position="107"/>
    </location>
</feature>
<feature type="region of interest" description="Repeat 2" evidence="2">
    <location>
        <begin position="109"/>
        <end position="181"/>
    </location>
</feature>
<feature type="region of interest" description="Disordered" evidence="3">
    <location>
        <begin position="522"/>
        <end position="552"/>
    </location>
</feature>
<feature type="short sequence motif" description="EAR" evidence="7">
    <location>
        <begin position="780"/>
        <end position="784"/>
    </location>
</feature>
<feature type="compositionally biased region" description="Low complexity" evidence="3">
    <location>
        <begin position="86"/>
        <end position="105"/>
    </location>
</feature>
<protein>
    <recommendedName>
        <fullName evidence="6">Protein SMAX1-LIKE 2</fullName>
        <shortName evidence="6">AtSMXL2</shortName>
    </recommendedName>
</protein>
<name>SMXL2_ARATH</name>
<accession>Q9M0C5</accession>
<evidence type="ECO:0000250" key="1">
    <source>
        <dbReference type="UniProtKB" id="Q9FHH2"/>
    </source>
</evidence>
<evidence type="ECO:0000255" key="2">
    <source>
        <dbReference type="PROSITE-ProRule" id="PRU01251"/>
    </source>
</evidence>
<evidence type="ECO:0000256" key="3">
    <source>
        <dbReference type="SAM" id="MobiDB-lite"/>
    </source>
</evidence>
<evidence type="ECO:0000269" key="4">
    <source>
    </source>
</evidence>
<evidence type="ECO:0000269" key="5">
    <source>
    </source>
</evidence>
<evidence type="ECO:0000303" key="6">
    <source>
    </source>
</evidence>
<evidence type="ECO:0000305" key="7"/>
<evidence type="ECO:0000312" key="8">
    <source>
        <dbReference type="Araport" id="AT4G30350"/>
    </source>
</evidence>
<evidence type="ECO:0000312" key="9">
    <source>
        <dbReference type="EMBL" id="CAB81028.1"/>
    </source>
</evidence>
<sequence length="924" mass="101395">MRADLITIQQTLTPEAATVLNQSIAEATRRNHGHTTPLHVAATLLSSSSGYLRQACIKSHPNSSHPLQCRALELCFSVALERLPTTSTTTTTTSSSSSSSPSQTQEPLLSNALTAALKRAQAHQRRGCPEQQQQPLLAVKVELEQLIISILDDPSVSRVMREASFSSPAVKSAIEQSLIGNSVSNSRQTGSPGIINPSAIGFGYRSVPAPVNRNLYLNPRLQQPGVGMQSGMMIQRTDEAKRVIEIMIRTRKRNPVLVGDSEPHILVKEILEKIENGEFSDGALRNFQVIRLEKELVSQLATRLGEISGLVETRIGGGGVVLDLGDLKWLVEHPAANGGAVVEMRKLLERYKGRLCFIGTATCETYLRCQVYYPSMENDWDLQAIPIAAKSSLPAIFPRLGSNNNNNAMLLSNNIISIESISPTRSFQIPMSKMSCCSRCLQSYENDVAKVEKDLTGDNRSVLPQWLQNAKANDDGDKKLTKDQQIVELQKKWNDLCLRLHPNQSVSERIAPSTLSMMKINTRSDITPPGSPVGTDLVLGRPNRGLSSPEKKTREARFGKLGDSFDIDLFKKLLKGLAKSVWWQHDAASSVAAAITECKHGNGKSKGDIWLMFTGPDRAGKSKMASALSDLVSGSQPITISLGSSSRMDDGLNIRGKTALDRFAEAVRRNPFAVIVLEDIDEADILLRNNVKIAIERGRICDSYGREVSLGNVIIILTANSSLGSAKNVASIDETRLESLVNKGWELRLSVCNSSKTRKRKPNWLYSDNDQTKQRKEICFDLNEAAEFDSSSDVTVEHDQEDNGNLVHKLVGLVDDAILFRPVDFDSIKSKTAESLKKRFSNGLADGLTVEIEDDALERIAGAIWLSKISLEEWLEEAMGSSLNSVKSRVSSSEDSVIRIELEDDLNDRISGGYLPSSIRTVVV</sequence>
<keyword id="KW-1185">Reference proteome</keyword>
<keyword id="KW-0677">Repeat</keyword>
<keyword id="KW-0804">Transcription</keyword>
<keyword id="KW-0805">Transcription regulation</keyword>
<reference key="1">
    <citation type="journal article" date="1999" name="Nature">
        <title>Sequence and analysis of chromosome 4 of the plant Arabidopsis thaliana.</title>
        <authorList>
            <person name="Mayer K.F.X."/>
            <person name="Schueller C."/>
            <person name="Wambutt R."/>
            <person name="Murphy G."/>
            <person name="Volckaert G."/>
            <person name="Pohl T."/>
            <person name="Duesterhoeft A."/>
            <person name="Stiekema W."/>
            <person name="Entian K.-D."/>
            <person name="Terryn N."/>
            <person name="Harris B."/>
            <person name="Ansorge W."/>
            <person name="Brandt P."/>
            <person name="Grivell L.A."/>
            <person name="Rieger M."/>
            <person name="Weichselgartner M."/>
            <person name="de Simone V."/>
            <person name="Obermaier B."/>
            <person name="Mache R."/>
            <person name="Mueller M."/>
            <person name="Kreis M."/>
            <person name="Delseny M."/>
            <person name="Puigdomenech P."/>
            <person name="Watson M."/>
            <person name="Schmidtheini T."/>
            <person name="Reichert B."/>
            <person name="Portetelle D."/>
            <person name="Perez-Alonso M."/>
            <person name="Boutry M."/>
            <person name="Bancroft I."/>
            <person name="Vos P."/>
            <person name="Hoheisel J."/>
            <person name="Zimmermann W."/>
            <person name="Wedler H."/>
            <person name="Ridley P."/>
            <person name="Langham S.-A."/>
            <person name="McCullagh B."/>
            <person name="Bilham L."/>
            <person name="Robben J."/>
            <person name="van der Schueren J."/>
            <person name="Grymonprez B."/>
            <person name="Chuang Y.-J."/>
            <person name="Vandenbussche F."/>
            <person name="Braeken M."/>
            <person name="Weltjens I."/>
            <person name="Voet M."/>
            <person name="Bastiaens I."/>
            <person name="Aert R."/>
            <person name="Defoor E."/>
            <person name="Weitzenegger T."/>
            <person name="Bothe G."/>
            <person name="Ramsperger U."/>
            <person name="Hilbert H."/>
            <person name="Braun M."/>
            <person name="Holzer E."/>
            <person name="Brandt A."/>
            <person name="Peters S."/>
            <person name="van Staveren M."/>
            <person name="Dirkse W."/>
            <person name="Mooijman P."/>
            <person name="Klein Lankhorst R."/>
            <person name="Rose M."/>
            <person name="Hauf J."/>
            <person name="Koetter P."/>
            <person name="Berneiser S."/>
            <person name="Hempel S."/>
            <person name="Feldpausch M."/>
            <person name="Lamberth S."/>
            <person name="Van den Daele H."/>
            <person name="De Keyser A."/>
            <person name="Buysshaert C."/>
            <person name="Gielen J."/>
            <person name="Villarroel R."/>
            <person name="De Clercq R."/>
            <person name="van Montagu M."/>
            <person name="Rogers J."/>
            <person name="Cronin A."/>
            <person name="Quail M.A."/>
            <person name="Bray-Allen S."/>
            <person name="Clark L."/>
            <person name="Doggett J."/>
            <person name="Hall S."/>
            <person name="Kay M."/>
            <person name="Lennard N."/>
            <person name="McLay K."/>
            <person name="Mayes R."/>
            <person name="Pettett A."/>
            <person name="Rajandream M.A."/>
            <person name="Lyne M."/>
            <person name="Benes V."/>
            <person name="Rechmann S."/>
            <person name="Borkova D."/>
            <person name="Bloecker H."/>
            <person name="Scharfe M."/>
            <person name="Grimm M."/>
            <person name="Loehnert T.-H."/>
            <person name="Dose S."/>
            <person name="de Haan M."/>
            <person name="Maarse A.C."/>
            <person name="Schaefer M."/>
            <person name="Mueller-Auer S."/>
            <person name="Gabel C."/>
            <person name="Fuchs M."/>
            <person name="Fartmann B."/>
            <person name="Granderath K."/>
            <person name="Dauner D."/>
            <person name="Herzl A."/>
            <person name="Neumann S."/>
            <person name="Argiriou A."/>
            <person name="Vitale D."/>
            <person name="Liguori R."/>
            <person name="Piravandi E."/>
            <person name="Massenet O."/>
            <person name="Quigley F."/>
            <person name="Clabauld G."/>
            <person name="Muendlein A."/>
            <person name="Felber R."/>
            <person name="Schnabl S."/>
            <person name="Hiller R."/>
            <person name="Schmidt W."/>
            <person name="Lecharny A."/>
            <person name="Aubourg S."/>
            <person name="Chefdor F."/>
            <person name="Cooke R."/>
            <person name="Berger C."/>
            <person name="Monfort A."/>
            <person name="Casacuberta E."/>
            <person name="Gibbons T."/>
            <person name="Weber N."/>
            <person name="Vandenbol M."/>
            <person name="Bargues M."/>
            <person name="Terol J."/>
            <person name="Torres A."/>
            <person name="Perez-Perez A."/>
            <person name="Purnelle B."/>
            <person name="Bent E."/>
            <person name="Johnson S."/>
            <person name="Tacon D."/>
            <person name="Jesse T."/>
            <person name="Heijnen L."/>
            <person name="Schwarz S."/>
            <person name="Scholler P."/>
            <person name="Heber S."/>
            <person name="Francs P."/>
            <person name="Bielke C."/>
            <person name="Frishman D."/>
            <person name="Haase D."/>
            <person name="Lemcke K."/>
            <person name="Mewes H.-W."/>
            <person name="Stocker S."/>
            <person name="Zaccaria P."/>
            <person name="Bevan M."/>
            <person name="Wilson R.K."/>
            <person name="de la Bastide M."/>
            <person name="Habermann K."/>
            <person name="Parnell L."/>
            <person name="Dedhia N."/>
            <person name="Gnoj L."/>
            <person name="Schutz K."/>
            <person name="Huang E."/>
            <person name="Spiegel L."/>
            <person name="Sekhon M."/>
            <person name="Murray J."/>
            <person name="Sheet P."/>
            <person name="Cordes M."/>
            <person name="Abu-Threideh J."/>
            <person name="Stoneking T."/>
            <person name="Kalicki J."/>
            <person name="Graves T."/>
            <person name="Harmon G."/>
            <person name="Edwards J."/>
            <person name="Latreille P."/>
            <person name="Courtney L."/>
            <person name="Cloud J."/>
            <person name="Abbott A."/>
            <person name="Scott K."/>
            <person name="Johnson D."/>
            <person name="Minx P."/>
            <person name="Bentley D."/>
            <person name="Fulton B."/>
            <person name="Miller N."/>
            <person name="Greco T."/>
            <person name="Kemp K."/>
            <person name="Kramer J."/>
            <person name="Fulton L."/>
            <person name="Mardis E."/>
            <person name="Dante M."/>
            <person name="Pepin K."/>
            <person name="Hillier L.W."/>
            <person name="Nelson J."/>
            <person name="Spieth J."/>
            <person name="Ryan E."/>
            <person name="Andrews S."/>
            <person name="Geisel C."/>
            <person name="Layman D."/>
            <person name="Du H."/>
            <person name="Ali J."/>
            <person name="Berghoff A."/>
            <person name="Jones K."/>
            <person name="Drone K."/>
            <person name="Cotton M."/>
            <person name="Joshu C."/>
            <person name="Antonoiu B."/>
            <person name="Zidanic M."/>
            <person name="Strong C."/>
            <person name="Sun H."/>
            <person name="Lamar B."/>
            <person name="Yordan C."/>
            <person name="Ma P."/>
            <person name="Zhong J."/>
            <person name="Preston R."/>
            <person name="Vil D."/>
            <person name="Shekher M."/>
            <person name="Matero A."/>
            <person name="Shah R."/>
            <person name="Swaby I.K."/>
            <person name="O'Shaughnessy A."/>
            <person name="Rodriguez M."/>
            <person name="Hoffman J."/>
            <person name="Till S."/>
            <person name="Granat S."/>
            <person name="Shohdy N."/>
            <person name="Hasegawa A."/>
            <person name="Hameed A."/>
            <person name="Lodhi M."/>
            <person name="Johnson A."/>
            <person name="Chen E."/>
            <person name="Marra M.A."/>
            <person name="Martienssen R."/>
            <person name="McCombie W.R."/>
        </authorList>
    </citation>
    <scope>NUCLEOTIDE SEQUENCE [LARGE SCALE GENOMIC DNA]</scope>
    <source>
        <strain>cv. Columbia</strain>
    </source>
</reference>
<reference key="2">
    <citation type="journal article" date="2017" name="Plant J.">
        <title>Araport11: a complete reannotation of the Arabidopsis thaliana reference genome.</title>
        <authorList>
            <person name="Cheng C.Y."/>
            <person name="Krishnakumar V."/>
            <person name="Chan A.P."/>
            <person name="Thibaud-Nissen F."/>
            <person name="Schobel S."/>
            <person name="Town C.D."/>
        </authorList>
    </citation>
    <scope>GENOME REANNOTATION</scope>
    <source>
        <strain>cv. Columbia</strain>
    </source>
</reference>
<reference key="3">
    <citation type="journal article" date="2013" name="Plant Physiol.">
        <title>SUPPRESSOR OF MORE AXILLARY GROWTH2 1 controls seed germination and seedling development in Arabidopsis.</title>
        <authorList>
            <person name="Stanga J.P."/>
            <person name="Smith S.M."/>
            <person name="Briggs W.R."/>
            <person name="Nelson D.C."/>
        </authorList>
    </citation>
    <scope>INDUCTION BY KARRIKINS AND STRIGOLACTONE</scope>
    <scope>TISSUE SPECIFICITY</scope>
    <scope>GENE FAMILY</scope>
    <scope>NOMENCLATURE</scope>
</reference>
<reference key="4">
    <citation type="journal article" date="2014" name="Curr. Opin. Plant Biol.">
        <title>Strigolactone signalling: standing on the shoulders of DWARFs.</title>
        <authorList>
            <person name="Bennett T."/>
            <person name="Leyser O."/>
        </authorList>
    </citation>
    <scope>REVIEW</scope>
</reference>
<reference key="5">
    <citation type="journal article" date="2016" name="Planta">
        <title>Functional redundancy in the control of seedling growth by the karrikin signaling pathway.</title>
        <authorList>
            <person name="Stanga J.P."/>
            <person name="Morffy N."/>
            <person name="Nelson D.C."/>
        </authorList>
    </citation>
    <scope>FUNCTION</scope>
    <scope>DISRUPTION PHENOTYPE</scope>
</reference>